<organism>
    <name type="scientific">Desulfotalea psychrophila (strain LSv54 / DSM 12343)</name>
    <dbReference type="NCBI Taxonomy" id="177439"/>
    <lineage>
        <taxon>Bacteria</taxon>
        <taxon>Pseudomonadati</taxon>
        <taxon>Thermodesulfobacteriota</taxon>
        <taxon>Desulfobulbia</taxon>
        <taxon>Desulfobulbales</taxon>
        <taxon>Desulfocapsaceae</taxon>
        <taxon>Desulfotalea</taxon>
    </lineage>
</organism>
<sequence length="679" mass="75363">MLFCAGNPWLPAFFLQFVIMKKIDLTEKQRDLLVDVLDAEAGFAEEKLLDIASGAVSPLFLSESDLLSFLQAANALYRAGYPLLSDEAYDFTFLTELRRRNPQHPYLLQVEAEPVQQGKTVELPMRMLSTDKAYDLESIRRWGRRIEKAAQEKGIDFTSLVFRGTPKLDGFAAYDDGRRLYTRGDGKKGTDVSRAFARGLQVSRGGSRGLGAGEIVVNKDYFTEHLAQFFDNSRNFQASLIKEKTLALPVVKAIEAGAAIFFPFSMLPDWRGSWLELLQEFEEIVEGLWQKVPYEIDGVVFEIIDEGLREVMGATRHHHRWQIAFKKNTEIAEVTVLRVRPQTSRLGRVNPVAEVEPTRLSGALIQRVTAHHYAMVRDRGIGPGARIRMSRSGEVIPKIEEVVKPVAAAQLDIPAHCPSCGSDLAWDGDYLFCLNNMSCPAQITNSMEHFFKILGNVDGFGPSSVQRLYEGGLVDLPALYAMESADFEQVGFGPKQATNMVEQLNRSREELIEDWRFLAAFGVHRLGMGNCEKLLRYVRLEDVFNLSEEQIVAEIKGFQEKTAHSICAGLAGIKDLFFQLFALGFKLEPTPLLAEGGQGEKSPISGKTIVFTGAMLAASRGDMEKQAKALGATVGKSITGKTDMLVTGQRVGATKMAKAETLGIAILSEEAYRQLVSLD</sequence>
<evidence type="ECO:0000255" key="1">
    <source>
        <dbReference type="HAMAP-Rule" id="MF_01588"/>
    </source>
</evidence>
<accession>Q6API9</accession>
<feature type="chain" id="PRO_0000313217" description="DNA ligase">
    <location>
        <begin position="1"/>
        <end position="679"/>
    </location>
</feature>
<feature type="domain" description="BRCT" evidence="1">
    <location>
        <begin position="599"/>
        <end position="679"/>
    </location>
</feature>
<feature type="active site" description="N6-AMP-lysine intermediate" evidence="1">
    <location>
        <position position="167"/>
    </location>
</feature>
<feature type="binding site" evidence="1">
    <location>
        <begin position="86"/>
        <end position="90"/>
    </location>
    <ligand>
        <name>NAD(+)</name>
        <dbReference type="ChEBI" id="CHEBI:57540"/>
    </ligand>
</feature>
<feature type="binding site" evidence="1">
    <location>
        <begin position="129"/>
        <end position="130"/>
    </location>
    <ligand>
        <name>NAD(+)</name>
        <dbReference type="ChEBI" id="CHEBI:57540"/>
    </ligand>
</feature>
<feature type="binding site" evidence="1">
    <location>
        <position position="183"/>
    </location>
    <ligand>
        <name>NAD(+)</name>
        <dbReference type="ChEBI" id="CHEBI:57540"/>
    </ligand>
</feature>
<feature type="binding site" evidence="1">
    <location>
        <position position="214"/>
    </location>
    <ligand>
        <name>NAD(+)</name>
        <dbReference type="ChEBI" id="CHEBI:57540"/>
    </ligand>
</feature>
<feature type="binding site" evidence="1">
    <location>
        <position position="326"/>
    </location>
    <ligand>
        <name>NAD(+)</name>
        <dbReference type="ChEBI" id="CHEBI:57540"/>
    </ligand>
</feature>
<feature type="binding site" evidence="1">
    <location>
        <position position="417"/>
    </location>
    <ligand>
        <name>Zn(2+)</name>
        <dbReference type="ChEBI" id="CHEBI:29105"/>
    </ligand>
</feature>
<feature type="binding site" evidence="1">
    <location>
        <position position="420"/>
    </location>
    <ligand>
        <name>Zn(2+)</name>
        <dbReference type="ChEBI" id="CHEBI:29105"/>
    </ligand>
</feature>
<feature type="binding site" evidence="1">
    <location>
        <position position="433"/>
    </location>
    <ligand>
        <name>Zn(2+)</name>
        <dbReference type="ChEBI" id="CHEBI:29105"/>
    </ligand>
</feature>
<feature type="binding site" evidence="1">
    <location>
        <position position="439"/>
    </location>
    <ligand>
        <name>Zn(2+)</name>
        <dbReference type="ChEBI" id="CHEBI:29105"/>
    </ligand>
</feature>
<reference key="1">
    <citation type="journal article" date="2004" name="Environ. Microbiol.">
        <title>The genome of Desulfotalea psychrophila, a sulfate-reducing bacterium from permanently cold Arctic sediments.</title>
        <authorList>
            <person name="Rabus R."/>
            <person name="Ruepp A."/>
            <person name="Frickey T."/>
            <person name="Rattei T."/>
            <person name="Fartmann B."/>
            <person name="Stark M."/>
            <person name="Bauer M."/>
            <person name="Zibat A."/>
            <person name="Lombardot T."/>
            <person name="Becker I."/>
            <person name="Amann J."/>
            <person name="Gellner K."/>
            <person name="Teeling H."/>
            <person name="Leuschner W.D."/>
            <person name="Gloeckner F.-O."/>
            <person name="Lupas A.N."/>
            <person name="Amann R."/>
            <person name="Klenk H.-P."/>
        </authorList>
    </citation>
    <scope>NUCLEOTIDE SEQUENCE [LARGE SCALE GENOMIC DNA]</scope>
    <source>
        <strain>DSM 12343 / LSv54</strain>
    </source>
</reference>
<dbReference type="EC" id="6.5.1.2" evidence="1"/>
<dbReference type="EMBL" id="CR522870">
    <property type="protein sequence ID" value="CAG35735.1"/>
    <property type="molecule type" value="Genomic_DNA"/>
</dbReference>
<dbReference type="SMR" id="Q6API9"/>
<dbReference type="STRING" id="177439.DP1006"/>
<dbReference type="KEGG" id="dps:DP1006"/>
<dbReference type="eggNOG" id="COG0272">
    <property type="taxonomic scope" value="Bacteria"/>
</dbReference>
<dbReference type="HOGENOM" id="CLU_007764_2_0_7"/>
<dbReference type="OrthoDB" id="9759736at2"/>
<dbReference type="Proteomes" id="UP000000602">
    <property type="component" value="Chromosome"/>
</dbReference>
<dbReference type="GO" id="GO:0003911">
    <property type="term" value="F:DNA ligase (NAD+) activity"/>
    <property type="evidence" value="ECO:0007669"/>
    <property type="project" value="UniProtKB-UniRule"/>
</dbReference>
<dbReference type="GO" id="GO:0046872">
    <property type="term" value="F:metal ion binding"/>
    <property type="evidence" value="ECO:0007669"/>
    <property type="project" value="UniProtKB-KW"/>
</dbReference>
<dbReference type="GO" id="GO:0006281">
    <property type="term" value="P:DNA repair"/>
    <property type="evidence" value="ECO:0007669"/>
    <property type="project" value="UniProtKB-KW"/>
</dbReference>
<dbReference type="GO" id="GO:0006260">
    <property type="term" value="P:DNA replication"/>
    <property type="evidence" value="ECO:0007669"/>
    <property type="project" value="UniProtKB-KW"/>
</dbReference>
<dbReference type="CDD" id="cd17748">
    <property type="entry name" value="BRCT_DNA_ligase_like"/>
    <property type="match status" value="1"/>
</dbReference>
<dbReference type="Gene3D" id="3.30.1490.70">
    <property type="match status" value="1"/>
</dbReference>
<dbReference type="Gene3D" id="1.10.150.20">
    <property type="entry name" value="5' to 3' exonuclease, C-terminal subdomain"/>
    <property type="match status" value="1"/>
</dbReference>
<dbReference type="Gene3D" id="3.40.50.10190">
    <property type="entry name" value="BRCT domain"/>
    <property type="match status" value="1"/>
</dbReference>
<dbReference type="Gene3D" id="3.30.470.30">
    <property type="entry name" value="DNA ligase/mRNA capping enzyme"/>
    <property type="match status" value="1"/>
</dbReference>
<dbReference type="Gene3D" id="2.40.50.140">
    <property type="entry name" value="Nucleic acid-binding proteins"/>
    <property type="match status" value="1"/>
</dbReference>
<dbReference type="HAMAP" id="MF_01588">
    <property type="entry name" value="DNA_ligase_A"/>
    <property type="match status" value="1"/>
</dbReference>
<dbReference type="InterPro" id="IPR001357">
    <property type="entry name" value="BRCT_dom"/>
</dbReference>
<dbReference type="InterPro" id="IPR036420">
    <property type="entry name" value="BRCT_dom_sf"/>
</dbReference>
<dbReference type="InterPro" id="IPR001679">
    <property type="entry name" value="DNA_ligase"/>
</dbReference>
<dbReference type="InterPro" id="IPR013839">
    <property type="entry name" value="DNAligase_adenylation"/>
</dbReference>
<dbReference type="InterPro" id="IPR013840">
    <property type="entry name" value="DNAligase_N"/>
</dbReference>
<dbReference type="InterPro" id="IPR012340">
    <property type="entry name" value="NA-bd_OB-fold"/>
</dbReference>
<dbReference type="InterPro" id="IPR004150">
    <property type="entry name" value="NAD_DNA_ligase_OB"/>
</dbReference>
<dbReference type="InterPro" id="IPR010994">
    <property type="entry name" value="RuvA_2-like"/>
</dbReference>
<dbReference type="Pfam" id="PF00533">
    <property type="entry name" value="BRCT"/>
    <property type="match status" value="1"/>
</dbReference>
<dbReference type="Pfam" id="PF01653">
    <property type="entry name" value="DNA_ligase_aden"/>
    <property type="match status" value="1"/>
</dbReference>
<dbReference type="Pfam" id="PF03120">
    <property type="entry name" value="DNA_ligase_OB"/>
    <property type="match status" value="1"/>
</dbReference>
<dbReference type="Pfam" id="PF14520">
    <property type="entry name" value="HHH_5"/>
    <property type="match status" value="1"/>
</dbReference>
<dbReference type="PIRSF" id="PIRSF001604">
    <property type="entry name" value="LigA"/>
    <property type="match status" value="1"/>
</dbReference>
<dbReference type="SMART" id="SM00292">
    <property type="entry name" value="BRCT"/>
    <property type="match status" value="1"/>
</dbReference>
<dbReference type="SMART" id="SM00532">
    <property type="entry name" value="LIGANc"/>
    <property type="match status" value="1"/>
</dbReference>
<dbReference type="SUPFAM" id="SSF52113">
    <property type="entry name" value="BRCT domain"/>
    <property type="match status" value="1"/>
</dbReference>
<dbReference type="SUPFAM" id="SSF56091">
    <property type="entry name" value="DNA ligase/mRNA capping enzyme, catalytic domain"/>
    <property type="match status" value="1"/>
</dbReference>
<dbReference type="SUPFAM" id="SSF50249">
    <property type="entry name" value="Nucleic acid-binding proteins"/>
    <property type="match status" value="1"/>
</dbReference>
<dbReference type="SUPFAM" id="SSF47781">
    <property type="entry name" value="RuvA domain 2-like"/>
    <property type="match status" value="1"/>
</dbReference>
<dbReference type="PROSITE" id="PS50172">
    <property type="entry name" value="BRCT"/>
    <property type="match status" value="1"/>
</dbReference>
<keyword id="KW-0227">DNA damage</keyword>
<keyword id="KW-0234">DNA repair</keyword>
<keyword id="KW-0235">DNA replication</keyword>
<keyword id="KW-0436">Ligase</keyword>
<keyword id="KW-0460">Magnesium</keyword>
<keyword id="KW-0464">Manganese</keyword>
<keyword id="KW-0479">Metal-binding</keyword>
<keyword id="KW-0520">NAD</keyword>
<keyword id="KW-1185">Reference proteome</keyword>
<keyword id="KW-0862">Zinc</keyword>
<gene>
    <name evidence="1" type="primary">ligA</name>
    <name type="ordered locus">DP1006</name>
</gene>
<protein>
    <recommendedName>
        <fullName evidence="1">DNA ligase</fullName>
        <ecNumber evidence="1">6.5.1.2</ecNumber>
    </recommendedName>
    <alternativeName>
        <fullName evidence="1">Polydeoxyribonucleotide synthase [NAD(+)]</fullName>
    </alternativeName>
</protein>
<proteinExistence type="inferred from homology"/>
<comment type="function">
    <text evidence="1">DNA ligase that catalyzes the formation of phosphodiester linkages between 5'-phosphoryl and 3'-hydroxyl groups in double-stranded DNA using NAD as a coenzyme and as the energy source for the reaction. It is essential for DNA replication and repair of damaged DNA.</text>
</comment>
<comment type="catalytic activity">
    <reaction evidence="1">
        <text>NAD(+) + (deoxyribonucleotide)n-3'-hydroxyl + 5'-phospho-(deoxyribonucleotide)m = (deoxyribonucleotide)n+m + AMP + beta-nicotinamide D-nucleotide.</text>
        <dbReference type="EC" id="6.5.1.2"/>
    </reaction>
</comment>
<comment type="cofactor">
    <cofactor evidence="1">
        <name>Mg(2+)</name>
        <dbReference type="ChEBI" id="CHEBI:18420"/>
    </cofactor>
    <cofactor evidence="1">
        <name>Mn(2+)</name>
        <dbReference type="ChEBI" id="CHEBI:29035"/>
    </cofactor>
</comment>
<comment type="similarity">
    <text evidence="1">Belongs to the NAD-dependent DNA ligase family. LigA subfamily.</text>
</comment>
<name>DNLJ_DESPS</name>